<keyword id="KW-0963">Cytoplasm</keyword>
<keyword id="KW-0217">Developmental protein</keyword>
<keyword id="KW-0903">Direct protein sequencing</keyword>
<keyword id="KW-0539">Nucleus</keyword>
<keyword id="KW-0607">Phytochrome signaling pathway</keyword>
<keyword id="KW-0736">Signalosome</keyword>
<gene>
    <name type="primary">CSN1</name>
    <name type="synonym">COP11</name>
    <name type="synonym">FUS6</name>
</gene>
<comment type="function">
    <text evidence="1">Component of the COP9 signalosome complex (CSN), a complex involved in various cellular and developmental processes such as photomorphogenesis and auxin and jasmonate responses. The CSN complex is an essential regulator of the ubiquitin (Ubl) conjugation pathway by mediating the deneddylation of the cullin subunits of SCF-type E3 ligase complexes, leading to decrease the Ubl ligase activity of SCF. It is involved in repression of photomorphogenesis in darkness by regulating the activity of COP1-containing Ubl ligase complexes (By similarity).</text>
</comment>
<comment type="subunit">
    <text>Component of the CSN complex, probably composed of CSN1, CSN2, CSN3, CSN4, CSN5 (CSN5A or CSN5B), CSN6 (CSN6A or CSN6B), CSN7 and CSN8.</text>
</comment>
<comment type="subcellular location">
    <subcellularLocation>
        <location>Cytoplasm</location>
    </subcellularLocation>
    <subcellularLocation>
        <location>Nucleus</location>
    </subcellularLocation>
</comment>
<comment type="similarity">
    <text evidence="2">Belongs to the CSN1 family.</text>
</comment>
<sequence>ELEALLITDNQIQARIDSHNKILYARHADQRNATFQK</sequence>
<dbReference type="SMR" id="P68352"/>
<dbReference type="GO" id="GO:0008180">
    <property type="term" value="C:COP9 signalosome"/>
    <property type="evidence" value="ECO:0007669"/>
    <property type="project" value="UniProtKB-KW"/>
</dbReference>
<dbReference type="GO" id="GO:0005737">
    <property type="term" value="C:cytoplasm"/>
    <property type="evidence" value="ECO:0007669"/>
    <property type="project" value="UniProtKB-SubCell"/>
</dbReference>
<dbReference type="GO" id="GO:0009585">
    <property type="term" value="P:red, far-red light phototransduction"/>
    <property type="evidence" value="ECO:0007669"/>
    <property type="project" value="UniProtKB-KW"/>
</dbReference>
<organism>
    <name type="scientific">Brassica oleracea</name>
    <name type="common">Wild cabbage</name>
    <dbReference type="NCBI Taxonomy" id="3712"/>
    <lineage>
        <taxon>Eukaryota</taxon>
        <taxon>Viridiplantae</taxon>
        <taxon>Streptophyta</taxon>
        <taxon>Embryophyta</taxon>
        <taxon>Tracheophyta</taxon>
        <taxon>Spermatophyta</taxon>
        <taxon>Magnoliopsida</taxon>
        <taxon>eudicotyledons</taxon>
        <taxon>Gunneridae</taxon>
        <taxon>Pentapetalae</taxon>
        <taxon>rosids</taxon>
        <taxon>malvids</taxon>
        <taxon>Brassicales</taxon>
        <taxon>Brassicaceae</taxon>
        <taxon>Brassiceae</taxon>
        <taxon>Brassica</taxon>
    </lineage>
</organism>
<feature type="chain" id="PRO_0000120966" description="COP9 signalosome complex subunit 1">
    <location>
        <begin position="1" status="less than"/>
        <end position="37" status="greater than"/>
    </location>
</feature>
<feature type="non-terminal residue">
    <location>
        <position position="1"/>
    </location>
</feature>
<feature type="non-terminal residue">
    <location>
        <position position="37"/>
    </location>
</feature>
<evidence type="ECO:0000250" key="1"/>
<evidence type="ECO:0000305" key="2"/>
<proteinExistence type="evidence at protein level"/>
<accession>P68352</accession>
<name>CSN1_BRAOL</name>
<reference key="1">
    <citation type="journal article" date="1998" name="FEBS Lett.">
        <title>The Arabidopsis homologue of an eIF3 complex subunit associates with the COP9 complex.</title>
        <authorList>
            <person name="Karniol B."/>
            <person name="Yahalom A."/>
            <person name="Kwok S."/>
            <person name="Tsuge T."/>
            <person name="Matsui M."/>
            <person name="Deng X.-W."/>
            <person name="Chamovitz D.A."/>
        </authorList>
    </citation>
    <scope>PROTEIN SEQUENCE</scope>
    <scope>COMPOSITION OF THE CSN COMPLEX</scope>
    <scope>INTERACTION WITH TIF3C1</scope>
</reference>
<protein>
    <recommendedName>
        <fullName>COP9 signalosome complex subunit 1</fullName>
        <shortName>CSN complex subunit 1</shortName>
    </recommendedName>
    <alternativeName>
        <fullName>Constitutive photomorphogenesis protein 11</fullName>
    </alternativeName>
    <alternativeName>
        <fullName>FUSCA protein 6</fullName>
        <shortName>FUSCA6</shortName>
    </alternativeName>
</protein>